<gene>
    <name evidence="1" type="primary">argG</name>
    <name type="ordered locus">sync_2928</name>
</gene>
<sequence length="401" mass="44118">MGRATKVVLAYSGGVDTSVCIPYLKQEWGVEEVITFAADLGQGDELEPIRLKALEAGATQSLVGDLIKPFIEEFAFPAIRANALYEGRYPLSTALARPLIARRLVEVAREVGADAVAHGCTGKGNDQVRFDVAIASLAPDLKVLTPAREWGMSREETIAYGERFGMPSPVSKKSPYSIDLNLLGRSIEAGPLEDPMVAPPEEVFAMTRSVDQTPNDAEEIEIQFEGGNPVAINGKRLEPVSLIREANLLAGTHGIGRLDMIENRVVGIKSREIYETPGLLLLIQAHQELESLTLAADVLRTKRQLEMQWADLVYQGLWFGPLKEALDGFMDRTQIHVNGVVRLKLHKGNATVTGRASTDNSLYIPEMASYGSEDKFDHRAAEGFIYVWGLPTRLWAAKHRR</sequence>
<keyword id="KW-0028">Amino-acid biosynthesis</keyword>
<keyword id="KW-0055">Arginine biosynthesis</keyword>
<keyword id="KW-0067">ATP-binding</keyword>
<keyword id="KW-0963">Cytoplasm</keyword>
<keyword id="KW-0436">Ligase</keyword>
<keyword id="KW-0547">Nucleotide-binding</keyword>
<keyword id="KW-1185">Reference proteome</keyword>
<comment type="catalytic activity">
    <reaction evidence="1">
        <text>L-citrulline + L-aspartate + ATP = 2-(N(omega)-L-arginino)succinate + AMP + diphosphate + H(+)</text>
        <dbReference type="Rhea" id="RHEA:10932"/>
        <dbReference type="ChEBI" id="CHEBI:15378"/>
        <dbReference type="ChEBI" id="CHEBI:29991"/>
        <dbReference type="ChEBI" id="CHEBI:30616"/>
        <dbReference type="ChEBI" id="CHEBI:33019"/>
        <dbReference type="ChEBI" id="CHEBI:57472"/>
        <dbReference type="ChEBI" id="CHEBI:57743"/>
        <dbReference type="ChEBI" id="CHEBI:456215"/>
        <dbReference type="EC" id="6.3.4.5"/>
    </reaction>
</comment>
<comment type="pathway">
    <text evidence="1">Amino-acid biosynthesis; L-arginine biosynthesis; L-arginine from L-ornithine and carbamoyl phosphate: step 2/3.</text>
</comment>
<comment type="subunit">
    <text evidence="1">Homotetramer.</text>
</comment>
<comment type="subcellular location">
    <subcellularLocation>
        <location evidence="1">Cytoplasm</location>
    </subcellularLocation>
</comment>
<comment type="similarity">
    <text evidence="1">Belongs to the argininosuccinate synthase family. Type 1 subfamily.</text>
</comment>
<evidence type="ECO:0000255" key="1">
    <source>
        <dbReference type="HAMAP-Rule" id="MF_00005"/>
    </source>
</evidence>
<feature type="chain" id="PRO_0000263981" description="Argininosuccinate synthase">
    <location>
        <begin position="1"/>
        <end position="401"/>
    </location>
</feature>
<feature type="binding site" evidence="1">
    <location>
        <begin position="10"/>
        <end position="18"/>
    </location>
    <ligand>
        <name>ATP</name>
        <dbReference type="ChEBI" id="CHEBI:30616"/>
    </ligand>
</feature>
<feature type="binding site" evidence="1">
    <location>
        <position position="38"/>
    </location>
    <ligand>
        <name>ATP</name>
        <dbReference type="ChEBI" id="CHEBI:30616"/>
    </ligand>
</feature>
<feature type="binding site" evidence="1">
    <location>
        <position position="89"/>
    </location>
    <ligand>
        <name>L-citrulline</name>
        <dbReference type="ChEBI" id="CHEBI:57743"/>
    </ligand>
</feature>
<feature type="binding site" evidence="1">
    <location>
        <position position="119"/>
    </location>
    <ligand>
        <name>ATP</name>
        <dbReference type="ChEBI" id="CHEBI:30616"/>
    </ligand>
</feature>
<feature type="binding site" evidence="1">
    <location>
        <position position="121"/>
    </location>
    <ligand>
        <name>L-aspartate</name>
        <dbReference type="ChEBI" id="CHEBI:29991"/>
    </ligand>
</feature>
<feature type="binding site" evidence="1">
    <location>
        <position position="125"/>
    </location>
    <ligand>
        <name>L-aspartate</name>
        <dbReference type="ChEBI" id="CHEBI:29991"/>
    </ligand>
</feature>
<feature type="binding site" evidence="1">
    <location>
        <position position="125"/>
    </location>
    <ligand>
        <name>L-citrulline</name>
        <dbReference type="ChEBI" id="CHEBI:57743"/>
    </ligand>
</feature>
<feature type="binding site" evidence="1">
    <location>
        <position position="126"/>
    </location>
    <ligand>
        <name>L-aspartate</name>
        <dbReference type="ChEBI" id="CHEBI:29991"/>
    </ligand>
</feature>
<feature type="binding site" evidence="1">
    <location>
        <position position="129"/>
    </location>
    <ligand>
        <name>L-citrulline</name>
        <dbReference type="ChEBI" id="CHEBI:57743"/>
    </ligand>
</feature>
<feature type="binding site" evidence="1">
    <location>
        <position position="177"/>
    </location>
    <ligand>
        <name>L-citrulline</name>
        <dbReference type="ChEBI" id="CHEBI:57743"/>
    </ligand>
</feature>
<feature type="binding site" evidence="1">
    <location>
        <position position="186"/>
    </location>
    <ligand>
        <name>L-citrulline</name>
        <dbReference type="ChEBI" id="CHEBI:57743"/>
    </ligand>
</feature>
<feature type="binding site" evidence="1">
    <location>
        <position position="262"/>
    </location>
    <ligand>
        <name>L-citrulline</name>
        <dbReference type="ChEBI" id="CHEBI:57743"/>
    </ligand>
</feature>
<feature type="binding site" evidence="1">
    <location>
        <position position="274"/>
    </location>
    <ligand>
        <name>L-citrulline</name>
        <dbReference type="ChEBI" id="CHEBI:57743"/>
    </ligand>
</feature>
<proteinExistence type="inferred from homology"/>
<dbReference type="EC" id="6.3.4.5" evidence="1"/>
<dbReference type="EMBL" id="CP000435">
    <property type="protein sequence ID" value="ABI45866.1"/>
    <property type="molecule type" value="Genomic_DNA"/>
</dbReference>
<dbReference type="RefSeq" id="WP_011620815.1">
    <property type="nucleotide sequence ID" value="NC_008319.1"/>
</dbReference>
<dbReference type="SMR" id="Q0I607"/>
<dbReference type="STRING" id="64471.sync_2928"/>
<dbReference type="KEGG" id="syg:sync_2928"/>
<dbReference type="eggNOG" id="COG0137">
    <property type="taxonomic scope" value="Bacteria"/>
</dbReference>
<dbReference type="HOGENOM" id="CLU_032784_4_2_3"/>
<dbReference type="OrthoDB" id="9801641at2"/>
<dbReference type="UniPathway" id="UPA00068">
    <property type="reaction ID" value="UER00113"/>
</dbReference>
<dbReference type="Proteomes" id="UP000001961">
    <property type="component" value="Chromosome"/>
</dbReference>
<dbReference type="GO" id="GO:0005737">
    <property type="term" value="C:cytoplasm"/>
    <property type="evidence" value="ECO:0007669"/>
    <property type="project" value="UniProtKB-SubCell"/>
</dbReference>
<dbReference type="GO" id="GO:0004055">
    <property type="term" value="F:argininosuccinate synthase activity"/>
    <property type="evidence" value="ECO:0007669"/>
    <property type="project" value="UniProtKB-UniRule"/>
</dbReference>
<dbReference type="GO" id="GO:0005524">
    <property type="term" value="F:ATP binding"/>
    <property type="evidence" value="ECO:0007669"/>
    <property type="project" value="UniProtKB-UniRule"/>
</dbReference>
<dbReference type="GO" id="GO:0000053">
    <property type="term" value="P:argininosuccinate metabolic process"/>
    <property type="evidence" value="ECO:0007669"/>
    <property type="project" value="TreeGrafter"/>
</dbReference>
<dbReference type="GO" id="GO:0006526">
    <property type="term" value="P:L-arginine biosynthetic process"/>
    <property type="evidence" value="ECO:0007669"/>
    <property type="project" value="UniProtKB-UniRule"/>
</dbReference>
<dbReference type="GO" id="GO:0000050">
    <property type="term" value="P:urea cycle"/>
    <property type="evidence" value="ECO:0007669"/>
    <property type="project" value="TreeGrafter"/>
</dbReference>
<dbReference type="CDD" id="cd01999">
    <property type="entry name" value="ASS"/>
    <property type="match status" value="1"/>
</dbReference>
<dbReference type="FunFam" id="3.40.50.620:FF:000019">
    <property type="entry name" value="Argininosuccinate synthase"/>
    <property type="match status" value="1"/>
</dbReference>
<dbReference type="FunFam" id="3.90.1260.10:FF:000007">
    <property type="entry name" value="Argininosuccinate synthase"/>
    <property type="match status" value="1"/>
</dbReference>
<dbReference type="Gene3D" id="3.90.1260.10">
    <property type="entry name" value="Argininosuccinate synthetase, chain A, domain 2"/>
    <property type="match status" value="1"/>
</dbReference>
<dbReference type="Gene3D" id="3.40.50.620">
    <property type="entry name" value="HUPs"/>
    <property type="match status" value="1"/>
</dbReference>
<dbReference type="Gene3D" id="1.20.5.470">
    <property type="entry name" value="Single helix bin"/>
    <property type="match status" value="1"/>
</dbReference>
<dbReference type="HAMAP" id="MF_00005">
    <property type="entry name" value="Arg_succ_synth_type1"/>
    <property type="match status" value="1"/>
</dbReference>
<dbReference type="InterPro" id="IPR048268">
    <property type="entry name" value="Arginosuc_syn_C"/>
</dbReference>
<dbReference type="InterPro" id="IPR048267">
    <property type="entry name" value="Arginosuc_syn_N"/>
</dbReference>
<dbReference type="InterPro" id="IPR001518">
    <property type="entry name" value="Arginosuc_synth"/>
</dbReference>
<dbReference type="InterPro" id="IPR018223">
    <property type="entry name" value="Arginosuc_synth_CS"/>
</dbReference>
<dbReference type="InterPro" id="IPR023434">
    <property type="entry name" value="Arginosuc_synth_type_1_subfam"/>
</dbReference>
<dbReference type="InterPro" id="IPR024074">
    <property type="entry name" value="AS_cat/multimer_dom_body"/>
</dbReference>
<dbReference type="InterPro" id="IPR014729">
    <property type="entry name" value="Rossmann-like_a/b/a_fold"/>
</dbReference>
<dbReference type="NCBIfam" id="TIGR00032">
    <property type="entry name" value="argG"/>
    <property type="match status" value="1"/>
</dbReference>
<dbReference type="NCBIfam" id="NF001770">
    <property type="entry name" value="PRK00509.1"/>
    <property type="match status" value="1"/>
</dbReference>
<dbReference type="PANTHER" id="PTHR11587">
    <property type="entry name" value="ARGININOSUCCINATE SYNTHASE"/>
    <property type="match status" value="1"/>
</dbReference>
<dbReference type="PANTHER" id="PTHR11587:SF2">
    <property type="entry name" value="ARGININOSUCCINATE SYNTHASE"/>
    <property type="match status" value="1"/>
</dbReference>
<dbReference type="Pfam" id="PF20979">
    <property type="entry name" value="Arginosuc_syn_C"/>
    <property type="match status" value="1"/>
</dbReference>
<dbReference type="Pfam" id="PF00764">
    <property type="entry name" value="Arginosuc_synth"/>
    <property type="match status" value="1"/>
</dbReference>
<dbReference type="SUPFAM" id="SSF52402">
    <property type="entry name" value="Adenine nucleotide alpha hydrolases-like"/>
    <property type="match status" value="1"/>
</dbReference>
<dbReference type="SUPFAM" id="SSF69864">
    <property type="entry name" value="Argininosuccinate synthetase, C-terminal domain"/>
    <property type="match status" value="1"/>
</dbReference>
<dbReference type="PROSITE" id="PS00564">
    <property type="entry name" value="ARGININOSUCCIN_SYN_1"/>
    <property type="match status" value="1"/>
</dbReference>
<dbReference type="PROSITE" id="PS00565">
    <property type="entry name" value="ARGININOSUCCIN_SYN_2"/>
    <property type="match status" value="1"/>
</dbReference>
<reference key="1">
    <citation type="journal article" date="2006" name="Proc. Natl. Acad. Sci. U.S.A.">
        <title>Genome sequence of Synechococcus CC9311: insights into adaptation to a coastal environment.</title>
        <authorList>
            <person name="Palenik B."/>
            <person name="Ren Q."/>
            <person name="Dupont C.L."/>
            <person name="Myers G.S."/>
            <person name="Heidelberg J.F."/>
            <person name="Badger J.H."/>
            <person name="Madupu R."/>
            <person name="Nelson W.C."/>
            <person name="Brinkac L.M."/>
            <person name="Dodson R.J."/>
            <person name="Durkin A.S."/>
            <person name="Daugherty S.C."/>
            <person name="Sullivan S.A."/>
            <person name="Khouri H."/>
            <person name="Mohamoud Y."/>
            <person name="Halpin R."/>
            <person name="Paulsen I.T."/>
        </authorList>
    </citation>
    <scope>NUCLEOTIDE SEQUENCE [LARGE SCALE GENOMIC DNA]</scope>
    <source>
        <strain>CC9311</strain>
    </source>
</reference>
<name>ASSY_SYNS3</name>
<accession>Q0I607</accession>
<organism>
    <name type="scientific">Synechococcus sp. (strain CC9311)</name>
    <dbReference type="NCBI Taxonomy" id="64471"/>
    <lineage>
        <taxon>Bacteria</taxon>
        <taxon>Bacillati</taxon>
        <taxon>Cyanobacteriota</taxon>
        <taxon>Cyanophyceae</taxon>
        <taxon>Synechococcales</taxon>
        <taxon>Synechococcaceae</taxon>
        <taxon>Synechococcus</taxon>
    </lineage>
</organism>
<protein>
    <recommendedName>
        <fullName evidence="1">Argininosuccinate synthase</fullName>
        <ecNumber evidence="1">6.3.4.5</ecNumber>
    </recommendedName>
    <alternativeName>
        <fullName evidence="1">Citrulline--aspartate ligase</fullName>
    </alternativeName>
</protein>